<accession>Q5UQU6</accession>
<organismHost>
    <name type="scientific">Acanthamoeba polyphaga</name>
    <name type="common">Amoeba</name>
    <dbReference type="NCBI Taxonomy" id="5757"/>
</organismHost>
<gene>
    <name type="ordered locus">MIMI_L359</name>
</gene>
<reference key="1">
    <citation type="journal article" date="2004" name="Science">
        <title>The 1.2-megabase genome sequence of Mimivirus.</title>
        <authorList>
            <person name="Raoult D."/>
            <person name="Audic S."/>
            <person name="Robert C."/>
            <person name="Abergel C."/>
            <person name="Renesto P."/>
            <person name="Ogata H."/>
            <person name="La Scola B."/>
            <person name="Susan M."/>
            <person name="Claverie J.-M."/>
        </authorList>
    </citation>
    <scope>NUCLEOTIDE SEQUENCE [LARGE SCALE GENOMIC DNA]</scope>
    <source>
        <strain>Rowbotham-Bradford</strain>
    </source>
</reference>
<organism>
    <name type="scientific">Acanthamoeba polyphaga mimivirus</name>
    <name type="common">APMV</name>
    <dbReference type="NCBI Taxonomy" id="212035"/>
    <lineage>
        <taxon>Viruses</taxon>
        <taxon>Varidnaviria</taxon>
        <taxon>Bamfordvirae</taxon>
        <taxon>Nucleocytoviricota</taxon>
        <taxon>Megaviricetes</taxon>
        <taxon>Imitervirales</taxon>
        <taxon>Mimiviridae</taxon>
        <taxon>Megamimivirinae</taxon>
        <taxon>Mimivirus</taxon>
        <taxon>Mimivirus bradfordmassiliense</taxon>
    </lineage>
</organism>
<comment type="function">
    <text>May be involved in DNA-mismatch repair.</text>
</comment>
<comment type="similarity">
    <text evidence="2">Belongs to the DNA mismatch repair MutS family.</text>
</comment>
<name>MUTSL_MIMIV</name>
<feature type="chain" id="PRO_0000247297" description="Putative DNA mismatch repair protein mutS homolog L359">
    <location>
        <begin position="1"/>
        <end position="1124"/>
    </location>
</feature>
<feature type="binding site" evidence="1">
    <location>
        <begin position="779"/>
        <end position="786"/>
    </location>
    <ligand>
        <name>ATP</name>
        <dbReference type="ChEBI" id="CHEBI:30616"/>
    </ligand>
</feature>
<keyword id="KW-0067">ATP-binding</keyword>
<keyword id="KW-0227">DNA damage</keyword>
<keyword id="KW-0234">DNA repair</keyword>
<keyword id="KW-0238">DNA-binding</keyword>
<keyword id="KW-0547">Nucleotide-binding</keyword>
<keyword id="KW-1185">Reference proteome</keyword>
<dbReference type="EMBL" id="AY653733">
    <property type="protein sequence ID" value="AAV50628.1"/>
    <property type="molecule type" value="Genomic_DNA"/>
</dbReference>
<dbReference type="SMR" id="Q5UQU6"/>
<dbReference type="KEGG" id="vg:9924979"/>
<dbReference type="OrthoDB" id="8908at10239"/>
<dbReference type="Proteomes" id="UP000001134">
    <property type="component" value="Genome"/>
</dbReference>
<dbReference type="GO" id="GO:0005524">
    <property type="term" value="F:ATP binding"/>
    <property type="evidence" value="ECO:0007669"/>
    <property type="project" value="UniProtKB-KW"/>
</dbReference>
<dbReference type="GO" id="GO:0140664">
    <property type="term" value="F:ATP-dependent DNA damage sensor activity"/>
    <property type="evidence" value="ECO:0007669"/>
    <property type="project" value="InterPro"/>
</dbReference>
<dbReference type="GO" id="GO:0030983">
    <property type="term" value="F:mismatched DNA binding"/>
    <property type="evidence" value="ECO:0007669"/>
    <property type="project" value="InterPro"/>
</dbReference>
<dbReference type="GO" id="GO:0006298">
    <property type="term" value="P:mismatch repair"/>
    <property type="evidence" value="ECO:0007669"/>
    <property type="project" value="InterPro"/>
</dbReference>
<dbReference type="CDD" id="cd00085">
    <property type="entry name" value="HNHc"/>
    <property type="match status" value="1"/>
</dbReference>
<dbReference type="Gene3D" id="1.10.1420.10">
    <property type="match status" value="2"/>
</dbReference>
<dbReference type="Gene3D" id="3.40.1170.10">
    <property type="entry name" value="DNA repair protein MutS, domain I"/>
    <property type="match status" value="1"/>
</dbReference>
<dbReference type="Gene3D" id="3.30.420.110">
    <property type="entry name" value="MutS, connector domain"/>
    <property type="match status" value="1"/>
</dbReference>
<dbReference type="Gene3D" id="3.40.50.300">
    <property type="entry name" value="P-loop containing nucleotide triphosphate hydrolases"/>
    <property type="match status" value="1"/>
</dbReference>
<dbReference type="InterPro" id="IPR007695">
    <property type="entry name" value="DNA_mismatch_repair_MutS-lik_N"/>
</dbReference>
<dbReference type="InterPro" id="IPR017261">
    <property type="entry name" value="DNA_mismatch_repair_MutS/MSH"/>
</dbReference>
<dbReference type="InterPro" id="IPR000432">
    <property type="entry name" value="DNA_mismatch_repair_MutS_C"/>
</dbReference>
<dbReference type="InterPro" id="IPR007696">
    <property type="entry name" value="DNA_mismatch_repair_MutS_core"/>
</dbReference>
<dbReference type="InterPro" id="IPR016151">
    <property type="entry name" value="DNA_mismatch_repair_MutS_N"/>
</dbReference>
<dbReference type="InterPro" id="IPR036187">
    <property type="entry name" value="DNA_mismatch_repair_MutS_sf"/>
</dbReference>
<dbReference type="InterPro" id="IPR003615">
    <property type="entry name" value="HNH_nuc"/>
</dbReference>
<dbReference type="InterPro" id="IPR045076">
    <property type="entry name" value="MutS"/>
</dbReference>
<dbReference type="InterPro" id="IPR036678">
    <property type="entry name" value="MutS_con_dom_sf"/>
</dbReference>
<dbReference type="InterPro" id="IPR027417">
    <property type="entry name" value="P-loop_NTPase"/>
</dbReference>
<dbReference type="PANTHER" id="PTHR11361:SF99">
    <property type="entry name" value="DNA MISMATCH REPAIR PROTEIN"/>
    <property type="match status" value="1"/>
</dbReference>
<dbReference type="PANTHER" id="PTHR11361">
    <property type="entry name" value="DNA MISMATCH REPAIR PROTEIN MUTS FAMILY MEMBER"/>
    <property type="match status" value="1"/>
</dbReference>
<dbReference type="Pfam" id="PF01624">
    <property type="entry name" value="MutS_I"/>
    <property type="match status" value="1"/>
</dbReference>
<dbReference type="Pfam" id="PF05192">
    <property type="entry name" value="MutS_III"/>
    <property type="match status" value="1"/>
</dbReference>
<dbReference type="Pfam" id="PF00488">
    <property type="entry name" value="MutS_V"/>
    <property type="match status" value="1"/>
</dbReference>
<dbReference type="PIRSF" id="PIRSF037677">
    <property type="entry name" value="DNA_mis_repair_Msh6"/>
    <property type="match status" value="1"/>
</dbReference>
<dbReference type="SMART" id="SM00534">
    <property type="entry name" value="MUTSac"/>
    <property type="match status" value="1"/>
</dbReference>
<dbReference type="SMART" id="SM00533">
    <property type="entry name" value="MUTSd"/>
    <property type="match status" value="1"/>
</dbReference>
<dbReference type="SUPFAM" id="SSF55271">
    <property type="entry name" value="DNA repair protein MutS, domain I"/>
    <property type="match status" value="1"/>
</dbReference>
<dbReference type="SUPFAM" id="SSF53150">
    <property type="entry name" value="DNA repair protein MutS, domain II"/>
    <property type="match status" value="1"/>
</dbReference>
<dbReference type="SUPFAM" id="SSF48334">
    <property type="entry name" value="DNA repair protein MutS, domain III"/>
    <property type="match status" value="1"/>
</dbReference>
<dbReference type="SUPFAM" id="SSF52540">
    <property type="entry name" value="P-loop containing nucleoside triphosphate hydrolases"/>
    <property type="match status" value="1"/>
</dbReference>
<dbReference type="PROSITE" id="PS00486">
    <property type="entry name" value="DNA_MISMATCH_REPAIR_2"/>
    <property type="match status" value="1"/>
</dbReference>
<protein>
    <recommendedName>
        <fullName>Putative DNA mismatch repair protein mutS homolog L359</fullName>
    </recommendedName>
</protein>
<proteinExistence type="inferred from homology"/>
<evidence type="ECO:0000255" key="1"/>
<evidence type="ECO:0000305" key="2"/>
<sequence>MVSHLIFTDFYSKKFQKMKYSSDSEDNKKETIYTYYFTEQEKYAKIYGSKTLVFIQIGKFYEAYCTRKKGYVNLAELEPLLNIKFIRRDDKPIKDGKPPKPNQFGINCVAISKNLSIMVNHGYTVVLFDQKSDGETIERECVGVYSPGTYLSDIQMQEANYLLSVYISEEKQLTCNKNLMAIGLSLVDISTGTNIIHEFYSNKFDERFGLDELVRMMQTFRPVESVIYYHPVNIDESAIKNVKLYLELDKYHNVHFYIYHNNKGEDALNLLTENSFKINFQNDYLAQIYEMNNQLTLNKKQSPLEILGLERRNYAAVSLMMMLKYIAEHNVLLLKNLSYPEIYLYNKHLILGNNAIEQLNVIDSNNLELYNSKISSVFDVINKTSTPMGKRFLKDNLLNPLSQENKKEIIKRYDYIEALIQGNIFKEIKTELKNIYDIERLHRRMAVGAIVPYEFTRLDNYYKATNRVYSVIKDNDVIKSIIPMNIFKEFVEYQVKYNKEFDTEKMANHANFGEISESFFRKGIHEDLDKIQEKIDYIQSLIKSTNYYFTSIIKDKCKKLGNKEILSMESNDREGYYFTISKSNEKILKQEIDKKKGIIKIDLTIGETLDIKKDDIVFKQLPKGRTKVFMAQLAEYTIKLPSLTEKLTELIKKKFIKSMVTYYSNHKSMLHQITRFVSEIDFLVSGAIVAKEYYYCKPSILSENSIPSYLQAKDLRHVIVERLCDETVYVPNDIELGNVPNIIHTKNKKDSSIEEVSIDETDKFKKVLGKKCNGIVLFSNNWAGKSTCMKSVGIAIILAQIGYYVPATEFNYEPYMALYARITGNDNIFKGLSSFALEMTELDAILMRTEKQGSNTLVIGDEVCKGTEDISGRAIVASALVSLSECDSTFIFSSHLHDIQNIDEVKSLNNLRVYHLRTEYDEENDCIIFDRKLMPGSGPSVYGLLVARYLVKNPKFINRAEIIKKRLTNDINVNLIPKKSNYNKDLLVKQCMICRYIPTTEYHKELESHHIHFQKNCWTDGKIKEKPYLSKNKLYNLVVLCRKCHNKVHQGEIIINGYTDTTIGPLLDYNMDIKKKIINGIKAVDDLEKSFKFSNNKSQIQKTKNTTVKKIQTSKKNNLVCEYA</sequence>